<proteinExistence type="evidence at transcript level"/>
<protein>
    <recommendedName>
        <fullName evidence="5">Pentatricopeptide repeat-containing protein At4g39620, chloroplastic</fullName>
    </recommendedName>
    <alternativeName>
        <fullName evidence="4">Protein EMBRYO DEFECTIVE 2453</fullName>
    </alternativeName>
</protein>
<reference key="1">
    <citation type="journal article" date="2005" name="Planta">
        <title>Arabidopsis emb175 and other ppr knockout mutants reveal essential roles for pentatricopeptide repeat (PPR) proteins in plant embryogenesis.</title>
        <authorList>
            <person name="Cushing D.A."/>
            <person name="Forsthoefel N.R."/>
            <person name="Gestaut D.R."/>
            <person name="Vernon D.M."/>
        </authorList>
    </citation>
    <scope>NUCLEOTIDE SEQUENCE [GENOMIC DNA]</scope>
    <scope>FUNCTION</scope>
    <scope>DISRUPTION PHENOTYPE</scope>
</reference>
<reference key="2">
    <citation type="journal article" date="1999" name="Nature">
        <title>Sequence and analysis of chromosome 4 of the plant Arabidopsis thaliana.</title>
        <authorList>
            <person name="Mayer K.F.X."/>
            <person name="Schueller C."/>
            <person name="Wambutt R."/>
            <person name="Murphy G."/>
            <person name="Volckaert G."/>
            <person name="Pohl T."/>
            <person name="Duesterhoeft A."/>
            <person name="Stiekema W."/>
            <person name="Entian K.-D."/>
            <person name="Terryn N."/>
            <person name="Harris B."/>
            <person name="Ansorge W."/>
            <person name="Brandt P."/>
            <person name="Grivell L.A."/>
            <person name="Rieger M."/>
            <person name="Weichselgartner M."/>
            <person name="de Simone V."/>
            <person name="Obermaier B."/>
            <person name="Mache R."/>
            <person name="Mueller M."/>
            <person name="Kreis M."/>
            <person name="Delseny M."/>
            <person name="Puigdomenech P."/>
            <person name="Watson M."/>
            <person name="Schmidtheini T."/>
            <person name="Reichert B."/>
            <person name="Portetelle D."/>
            <person name="Perez-Alonso M."/>
            <person name="Boutry M."/>
            <person name="Bancroft I."/>
            <person name="Vos P."/>
            <person name="Hoheisel J."/>
            <person name="Zimmermann W."/>
            <person name="Wedler H."/>
            <person name="Ridley P."/>
            <person name="Langham S.-A."/>
            <person name="McCullagh B."/>
            <person name="Bilham L."/>
            <person name="Robben J."/>
            <person name="van der Schueren J."/>
            <person name="Grymonprez B."/>
            <person name="Chuang Y.-J."/>
            <person name="Vandenbussche F."/>
            <person name="Braeken M."/>
            <person name="Weltjens I."/>
            <person name="Voet M."/>
            <person name="Bastiaens I."/>
            <person name="Aert R."/>
            <person name="Defoor E."/>
            <person name="Weitzenegger T."/>
            <person name="Bothe G."/>
            <person name="Ramsperger U."/>
            <person name="Hilbert H."/>
            <person name="Braun M."/>
            <person name="Holzer E."/>
            <person name="Brandt A."/>
            <person name="Peters S."/>
            <person name="van Staveren M."/>
            <person name="Dirkse W."/>
            <person name="Mooijman P."/>
            <person name="Klein Lankhorst R."/>
            <person name="Rose M."/>
            <person name="Hauf J."/>
            <person name="Koetter P."/>
            <person name="Berneiser S."/>
            <person name="Hempel S."/>
            <person name="Feldpausch M."/>
            <person name="Lamberth S."/>
            <person name="Van den Daele H."/>
            <person name="De Keyser A."/>
            <person name="Buysshaert C."/>
            <person name="Gielen J."/>
            <person name="Villarroel R."/>
            <person name="De Clercq R."/>
            <person name="van Montagu M."/>
            <person name="Rogers J."/>
            <person name="Cronin A."/>
            <person name="Quail M.A."/>
            <person name="Bray-Allen S."/>
            <person name="Clark L."/>
            <person name="Doggett J."/>
            <person name="Hall S."/>
            <person name="Kay M."/>
            <person name="Lennard N."/>
            <person name="McLay K."/>
            <person name="Mayes R."/>
            <person name="Pettett A."/>
            <person name="Rajandream M.A."/>
            <person name="Lyne M."/>
            <person name="Benes V."/>
            <person name="Rechmann S."/>
            <person name="Borkova D."/>
            <person name="Bloecker H."/>
            <person name="Scharfe M."/>
            <person name="Grimm M."/>
            <person name="Loehnert T.-H."/>
            <person name="Dose S."/>
            <person name="de Haan M."/>
            <person name="Maarse A.C."/>
            <person name="Schaefer M."/>
            <person name="Mueller-Auer S."/>
            <person name="Gabel C."/>
            <person name="Fuchs M."/>
            <person name="Fartmann B."/>
            <person name="Granderath K."/>
            <person name="Dauner D."/>
            <person name="Herzl A."/>
            <person name="Neumann S."/>
            <person name="Argiriou A."/>
            <person name="Vitale D."/>
            <person name="Liguori R."/>
            <person name="Piravandi E."/>
            <person name="Massenet O."/>
            <person name="Quigley F."/>
            <person name="Clabauld G."/>
            <person name="Muendlein A."/>
            <person name="Felber R."/>
            <person name="Schnabl S."/>
            <person name="Hiller R."/>
            <person name="Schmidt W."/>
            <person name="Lecharny A."/>
            <person name="Aubourg S."/>
            <person name="Chefdor F."/>
            <person name="Cooke R."/>
            <person name="Berger C."/>
            <person name="Monfort A."/>
            <person name="Casacuberta E."/>
            <person name="Gibbons T."/>
            <person name="Weber N."/>
            <person name="Vandenbol M."/>
            <person name="Bargues M."/>
            <person name="Terol J."/>
            <person name="Torres A."/>
            <person name="Perez-Perez A."/>
            <person name="Purnelle B."/>
            <person name="Bent E."/>
            <person name="Johnson S."/>
            <person name="Tacon D."/>
            <person name="Jesse T."/>
            <person name="Heijnen L."/>
            <person name="Schwarz S."/>
            <person name="Scholler P."/>
            <person name="Heber S."/>
            <person name="Francs P."/>
            <person name="Bielke C."/>
            <person name="Frishman D."/>
            <person name="Haase D."/>
            <person name="Lemcke K."/>
            <person name="Mewes H.-W."/>
            <person name="Stocker S."/>
            <person name="Zaccaria P."/>
            <person name="Bevan M."/>
            <person name="Wilson R.K."/>
            <person name="de la Bastide M."/>
            <person name="Habermann K."/>
            <person name="Parnell L."/>
            <person name="Dedhia N."/>
            <person name="Gnoj L."/>
            <person name="Schutz K."/>
            <person name="Huang E."/>
            <person name="Spiegel L."/>
            <person name="Sekhon M."/>
            <person name="Murray J."/>
            <person name="Sheet P."/>
            <person name="Cordes M."/>
            <person name="Abu-Threideh J."/>
            <person name="Stoneking T."/>
            <person name="Kalicki J."/>
            <person name="Graves T."/>
            <person name="Harmon G."/>
            <person name="Edwards J."/>
            <person name="Latreille P."/>
            <person name="Courtney L."/>
            <person name="Cloud J."/>
            <person name="Abbott A."/>
            <person name="Scott K."/>
            <person name="Johnson D."/>
            <person name="Minx P."/>
            <person name="Bentley D."/>
            <person name="Fulton B."/>
            <person name="Miller N."/>
            <person name="Greco T."/>
            <person name="Kemp K."/>
            <person name="Kramer J."/>
            <person name="Fulton L."/>
            <person name="Mardis E."/>
            <person name="Dante M."/>
            <person name="Pepin K."/>
            <person name="Hillier L.W."/>
            <person name="Nelson J."/>
            <person name="Spieth J."/>
            <person name="Ryan E."/>
            <person name="Andrews S."/>
            <person name="Geisel C."/>
            <person name="Layman D."/>
            <person name="Du H."/>
            <person name="Ali J."/>
            <person name="Berghoff A."/>
            <person name="Jones K."/>
            <person name="Drone K."/>
            <person name="Cotton M."/>
            <person name="Joshu C."/>
            <person name="Antonoiu B."/>
            <person name="Zidanic M."/>
            <person name="Strong C."/>
            <person name="Sun H."/>
            <person name="Lamar B."/>
            <person name="Yordan C."/>
            <person name="Ma P."/>
            <person name="Zhong J."/>
            <person name="Preston R."/>
            <person name="Vil D."/>
            <person name="Shekher M."/>
            <person name="Matero A."/>
            <person name="Shah R."/>
            <person name="Swaby I.K."/>
            <person name="O'Shaughnessy A."/>
            <person name="Rodriguez M."/>
            <person name="Hoffman J."/>
            <person name="Till S."/>
            <person name="Granat S."/>
            <person name="Shohdy N."/>
            <person name="Hasegawa A."/>
            <person name="Hameed A."/>
            <person name="Lodhi M."/>
            <person name="Johnson A."/>
            <person name="Chen E."/>
            <person name="Marra M.A."/>
            <person name="Martienssen R."/>
            <person name="McCombie W.R."/>
        </authorList>
    </citation>
    <scope>NUCLEOTIDE SEQUENCE [LARGE SCALE GENOMIC DNA]</scope>
    <source>
        <strain>cv. Columbia</strain>
    </source>
</reference>
<reference key="3">
    <citation type="journal article" date="2017" name="Plant J.">
        <title>Araport11: a complete reannotation of the Arabidopsis thaliana reference genome.</title>
        <authorList>
            <person name="Cheng C.Y."/>
            <person name="Krishnakumar V."/>
            <person name="Chan A.P."/>
            <person name="Thibaud-Nissen F."/>
            <person name="Schobel S."/>
            <person name="Town C.D."/>
        </authorList>
    </citation>
    <scope>GENOME REANNOTATION</scope>
    <source>
        <strain>cv. Columbia</strain>
    </source>
</reference>
<reference key="4">
    <citation type="journal article" date="2004" name="Genome Res.">
        <title>Whole genome sequence comparisons and 'full-length' cDNA sequences: a combined approach to evaluate and improve Arabidopsis genome annotation.</title>
        <authorList>
            <person name="Castelli V."/>
            <person name="Aury J.-M."/>
            <person name="Jaillon O."/>
            <person name="Wincker P."/>
            <person name="Clepet C."/>
            <person name="Menard M."/>
            <person name="Cruaud C."/>
            <person name="Quetier F."/>
            <person name="Scarpelli C."/>
            <person name="Schaechter V."/>
            <person name="Temple G."/>
            <person name="Caboche M."/>
            <person name="Weissenbach J."/>
            <person name="Salanoubat M."/>
        </authorList>
    </citation>
    <scope>NUCLEOTIDE SEQUENCE [LARGE SCALE MRNA] OF 504-563</scope>
    <source>
        <strain>cv. Columbia</strain>
    </source>
</reference>
<reference key="5">
    <citation type="journal article" date="2004" name="Plant Cell">
        <title>Genome-wide analysis of Arabidopsis pentatricopeptide repeat proteins reveals their essential role in organelle biogenesis.</title>
        <authorList>
            <person name="Lurin C."/>
            <person name="Andres C."/>
            <person name="Aubourg S."/>
            <person name="Bellaoui M."/>
            <person name="Bitton F."/>
            <person name="Bruyere C."/>
            <person name="Caboche M."/>
            <person name="Debast C."/>
            <person name="Gualberto J."/>
            <person name="Hoffmann B."/>
            <person name="Lecharny A."/>
            <person name="Le Ret M."/>
            <person name="Martin-Magniette M.-L."/>
            <person name="Mireau H."/>
            <person name="Peeters N."/>
            <person name="Renou J.-P."/>
            <person name="Szurek B."/>
            <person name="Taconnat L."/>
            <person name="Small I."/>
        </authorList>
    </citation>
    <scope>GENE FAMILY</scope>
</reference>
<accession>Q9SV96</accession>
<evidence type="ECO:0000255" key="1"/>
<evidence type="ECO:0000256" key="2">
    <source>
        <dbReference type="SAM" id="MobiDB-lite"/>
    </source>
</evidence>
<evidence type="ECO:0000269" key="3">
    <source>
    </source>
</evidence>
<evidence type="ECO:0000303" key="4">
    <source>
    </source>
</evidence>
<evidence type="ECO:0000305" key="5"/>
<evidence type="ECO:0000312" key="6">
    <source>
        <dbReference type="Araport" id="AT4G39620"/>
    </source>
</evidence>
<comment type="function">
    <text evidence="3">Essential for embryo development.</text>
</comment>
<comment type="subcellular location">
    <subcellularLocation>
        <location evidence="5">Plastid</location>
        <location evidence="5">Chloroplast</location>
    </subcellularLocation>
</comment>
<comment type="alternative products">
    <event type="alternative splicing"/>
    <isoform>
        <id>Q9SV96-1</id>
        <name>1</name>
        <sequence type="displayed"/>
    </isoform>
    <text>A number of isoforms are produced. According to EST sequences.</text>
</comment>
<comment type="disruption phenotype">
    <text evidence="3">Embryonic lethality due to embryo development arrest at early globular stage.</text>
</comment>
<comment type="similarity">
    <text evidence="5">Belongs to the PPR family. P subfamily.</text>
</comment>
<comment type="online information" name="Pentatricopeptide repeat proteins">
    <link uri="https://ppr.plantenergy.uwa.edu.au"/>
</comment>
<organism>
    <name type="scientific">Arabidopsis thaliana</name>
    <name type="common">Mouse-ear cress</name>
    <dbReference type="NCBI Taxonomy" id="3702"/>
    <lineage>
        <taxon>Eukaryota</taxon>
        <taxon>Viridiplantae</taxon>
        <taxon>Streptophyta</taxon>
        <taxon>Embryophyta</taxon>
        <taxon>Tracheophyta</taxon>
        <taxon>Spermatophyta</taxon>
        <taxon>Magnoliopsida</taxon>
        <taxon>eudicotyledons</taxon>
        <taxon>Gunneridae</taxon>
        <taxon>Pentapetalae</taxon>
        <taxon>rosids</taxon>
        <taxon>malvids</taxon>
        <taxon>Brassicales</taxon>
        <taxon>Brassicaceae</taxon>
        <taxon>Camelineae</taxon>
        <taxon>Arabidopsis</taxon>
    </lineage>
</organism>
<feature type="transit peptide" description="Chloroplast" evidence="1">
    <location>
        <begin position="1"/>
        <end position="47"/>
    </location>
</feature>
<feature type="chain" id="PRO_0000363475" description="Pentatricopeptide repeat-containing protein At4g39620, chloroplastic">
    <location>
        <begin position="48"/>
        <end position="563"/>
    </location>
</feature>
<feature type="repeat" description="PPR 1">
    <location>
        <begin position="132"/>
        <end position="166"/>
    </location>
</feature>
<feature type="repeat" description="PPR 2">
    <location>
        <begin position="167"/>
        <end position="197"/>
    </location>
</feature>
<feature type="repeat" description="PPR 3">
    <location>
        <begin position="207"/>
        <end position="241"/>
    </location>
</feature>
<feature type="repeat" description="PPR 4">
    <location>
        <begin position="242"/>
        <end position="276"/>
    </location>
</feature>
<feature type="repeat" description="PPR 5">
    <location>
        <begin position="277"/>
        <end position="311"/>
    </location>
</feature>
<feature type="repeat" description="PPR 6">
    <location>
        <begin position="312"/>
        <end position="346"/>
    </location>
</feature>
<feature type="repeat" description="PPR 7">
    <location>
        <begin position="347"/>
        <end position="381"/>
    </location>
</feature>
<feature type="repeat" description="PPR 8">
    <location>
        <begin position="382"/>
        <end position="416"/>
    </location>
</feature>
<feature type="repeat" description="PPR 9">
    <location>
        <begin position="417"/>
        <end position="451"/>
    </location>
</feature>
<feature type="region of interest" description="Disordered" evidence="2">
    <location>
        <begin position="468"/>
        <end position="501"/>
    </location>
</feature>
<feature type="region of interest" description="Disordered" evidence="2">
    <location>
        <begin position="520"/>
        <end position="551"/>
    </location>
</feature>
<feature type="compositionally biased region" description="Basic and acidic residues" evidence="2">
    <location>
        <begin position="520"/>
        <end position="537"/>
    </location>
</feature>
<keyword id="KW-0025">Alternative splicing</keyword>
<keyword id="KW-0150">Chloroplast</keyword>
<keyword id="KW-0934">Plastid</keyword>
<keyword id="KW-1185">Reference proteome</keyword>
<keyword id="KW-0677">Repeat</keyword>
<keyword id="KW-0809">Transit peptide</keyword>
<sequence>MDYLLTSPSSLRFSDFISSIPKETDHKWLRFSVNLGDARRSTRTRITCGAISSRRKLAERESAERENRVLVRSLMSRISDREPLVKTLDKYVKVVRCDHCFLLFEELGKSDKWLQCLEVFRWMQKQRWYIPDNGVYSKLISVMGKKGQTRMAMWLFSEMKNSGCRPDASVYNALITAHLHTRDKAKALEKVRGYLDKMKGIERCQPNVVTYNILLRAFAQSGKVDQVNALFKDLDMSPVSPDVYTFNGVMDAYGKNGMIKEMEAVLTRMRSNECKPDIITFNVLIDSYGKKQEFEKMEQTFKSLMRSKEKPTLPTFNSMIINYGKARMIDKAEWVFKKMNDMNYIPSFITYECMIMMYGYCGSVSRAREIFEEVGESDRVLKASTLNAMLEVYCRNGLYIEADKLFHNASAFRVHPDASTYKFLYKAYTKADMKEQVQILMKKMEKDGIVPNKRFFLEALEVFGSRLPGSGSENRKSTRSSRSRDSPKGRGGNQLTEFQDKDNKHVFRAVQDCRKNYLENLSGHDKGSRDESRKPSQEKQPLFASDQNNMMIKEKKELFTRVL</sequence>
<gene>
    <name evidence="4" type="primary">EMB2453</name>
    <name evidence="6" type="ordered locus">At4g39620</name>
    <name type="ORF">F23K16.250</name>
</gene>
<name>PP358_ARATH</name>
<dbReference type="EMBL" id="AY864349">
    <property type="protein sequence ID" value="AAW62964.1"/>
    <property type="molecule type" value="Genomic_DNA"/>
</dbReference>
<dbReference type="EMBL" id="AL078620">
    <property type="protein sequence ID" value="CAB44697.1"/>
    <property type="molecule type" value="Genomic_DNA"/>
</dbReference>
<dbReference type="EMBL" id="AL161595">
    <property type="protein sequence ID" value="CAB80625.1"/>
    <property type="molecule type" value="Genomic_DNA"/>
</dbReference>
<dbReference type="EMBL" id="CP002687">
    <property type="protein sequence ID" value="AEE87094.1"/>
    <property type="molecule type" value="Genomic_DNA"/>
</dbReference>
<dbReference type="EMBL" id="BX826642">
    <property type="status" value="NOT_ANNOTATED_CDS"/>
    <property type="molecule type" value="mRNA"/>
</dbReference>
<dbReference type="PIR" id="T09378">
    <property type="entry name" value="T09378"/>
</dbReference>
<dbReference type="RefSeq" id="NP_195672.1">
    <molecule id="Q9SV96-1"/>
    <property type="nucleotide sequence ID" value="NM_120122.2"/>
</dbReference>
<dbReference type="SMR" id="Q9SV96"/>
<dbReference type="FunCoup" id="Q9SV96">
    <property type="interactions" value="1517"/>
</dbReference>
<dbReference type="STRING" id="3702.Q9SV96"/>
<dbReference type="PaxDb" id="3702-AT4G39620.1"/>
<dbReference type="ProteomicsDB" id="249249">
    <molecule id="Q9SV96-1"/>
</dbReference>
<dbReference type="EnsemblPlants" id="AT4G39620.1">
    <molecule id="Q9SV96-1"/>
    <property type="protein sequence ID" value="AT4G39620.1"/>
    <property type="gene ID" value="AT4G39620"/>
</dbReference>
<dbReference type="GeneID" id="830116"/>
<dbReference type="Gramene" id="AT4G39620.1">
    <molecule id="Q9SV96-1"/>
    <property type="protein sequence ID" value="AT4G39620.1"/>
    <property type="gene ID" value="AT4G39620"/>
</dbReference>
<dbReference type="KEGG" id="ath:AT4G39620"/>
<dbReference type="Araport" id="AT4G39620"/>
<dbReference type="TAIR" id="AT4G39620">
    <property type="gene designation" value="EMB2453"/>
</dbReference>
<dbReference type="eggNOG" id="KOG4197">
    <property type="taxonomic scope" value="Eukaryota"/>
</dbReference>
<dbReference type="InParanoid" id="Q9SV96"/>
<dbReference type="PhylomeDB" id="Q9SV96"/>
<dbReference type="PRO" id="PR:Q9SV96"/>
<dbReference type="Proteomes" id="UP000006548">
    <property type="component" value="Chromosome 4"/>
</dbReference>
<dbReference type="ExpressionAtlas" id="Q9SV96">
    <property type="expression patterns" value="baseline and differential"/>
</dbReference>
<dbReference type="GO" id="GO:0009507">
    <property type="term" value="C:chloroplast"/>
    <property type="evidence" value="ECO:0007669"/>
    <property type="project" value="UniProtKB-SubCell"/>
</dbReference>
<dbReference type="GO" id="GO:0003729">
    <property type="term" value="F:mRNA binding"/>
    <property type="evidence" value="ECO:0007669"/>
    <property type="project" value="InterPro"/>
</dbReference>
<dbReference type="GO" id="GO:0009793">
    <property type="term" value="P:embryo development ending in seed dormancy"/>
    <property type="evidence" value="ECO:0000315"/>
    <property type="project" value="TAIR"/>
</dbReference>
<dbReference type="FunFam" id="1.25.40.10:FF:002938">
    <property type="entry name" value="Pentatricopeptide repeat-containing protein At4g39620, chloroplastic"/>
    <property type="match status" value="1"/>
</dbReference>
<dbReference type="Gene3D" id="1.25.40.10">
    <property type="entry name" value="Tetratricopeptide repeat domain"/>
    <property type="match status" value="3"/>
</dbReference>
<dbReference type="InterPro" id="IPR002885">
    <property type="entry name" value="Pentatricopeptide_rpt"/>
</dbReference>
<dbReference type="InterPro" id="IPR044179">
    <property type="entry name" value="PPR5-like"/>
</dbReference>
<dbReference type="InterPro" id="IPR011990">
    <property type="entry name" value="TPR-like_helical_dom_sf"/>
</dbReference>
<dbReference type="NCBIfam" id="TIGR00756">
    <property type="entry name" value="PPR"/>
    <property type="match status" value="6"/>
</dbReference>
<dbReference type="PANTHER" id="PTHR47874">
    <property type="entry name" value="EXPRESSED PROTEIN"/>
    <property type="match status" value="1"/>
</dbReference>
<dbReference type="PANTHER" id="PTHR47874:SF5">
    <property type="entry name" value="PENTATRICOPEPTIDE REPEAT-CONTAINING PROTEIN PPR5 HOMOLOG, CHLOROPLASTIC"/>
    <property type="match status" value="1"/>
</dbReference>
<dbReference type="Pfam" id="PF01535">
    <property type="entry name" value="PPR"/>
    <property type="match status" value="4"/>
</dbReference>
<dbReference type="Pfam" id="PF13041">
    <property type="entry name" value="PPR_2"/>
    <property type="match status" value="2"/>
</dbReference>
<dbReference type="PROSITE" id="PS51375">
    <property type="entry name" value="PPR"/>
    <property type="match status" value="9"/>
</dbReference>